<feature type="chain" id="PRO_1000140809" description="Small ribosomal subunit protein uS4">
    <location>
        <begin position="1"/>
        <end position="206"/>
    </location>
</feature>
<feature type="domain" description="S4 RNA-binding" evidence="1">
    <location>
        <begin position="98"/>
        <end position="158"/>
    </location>
</feature>
<reference key="1">
    <citation type="submission" date="2008-01" db="EMBL/GenBank/DDBJ databases">
        <title>Complete sequence of Thermoanaerobacter sp. X514.</title>
        <authorList>
            <consortium name="US DOE Joint Genome Institute"/>
            <person name="Copeland A."/>
            <person name="Lucas S."/>
            <person name="Lapidus A."/>
            <person name="Barry K."/>
            <person name="Glavina del Rio T."/>
            <person name="Dalin E."/>
            <person name="Tice H."/>
            <person name="Pitluck S."/>
            <person name="Bruce D."/>
            <person name="Goodwin L."/>
            <person name="Saunders E."/>
            <person name="Brettin T."/>
            <person name="Detter J.C."/>
            <person name="Han C."/>
            <person name="Schmutz J."/>
            <person name="Larimer F."/>
            <person name="Land M."/>
            <person name="Hauser L."/>
            <person name="Kyrpides N."/>
            <person name="Kim E."/>
            <person name="Hemme C."/>
            <person name="Fields M.W."/>
            <person name="He Z."/>
            <person name="Zhou J."/>
            <person name="Richardson P."/>
        </authorList>
    </citation>
    <scope>NUCLEOTIDE SEQUENCE [LARGE SCALE GENOMIC DNA]</scope>
    <source>
        <strain>X514</strain>
    </source>
</reference>
<dbReference type="EMBL" id="CP000923">
    <property type="protein sequence ID" value="ABY92196.1"/>
    <property type="molecule type" value="Genomic_DNA"/>
</dbReference>
<dbReference type="RefSeq" id="WP_003868586.1">
    <property type="nucleotide sequence ID" value="NC_010320.1"/>
</dbReference>
<dbReference type="SMR" id="B0K5S0"/>
<dbReference type="KEGG" id="tex:Teth514_0894"/>
<dbReference type="HOGENOM" id="CLU_092403_0_2_9"/>
<dbReference type="Proteomes" id="UP000002155">
    <property type="component" value="Chromosome"/>
</dbReference>
<dbReference type="GO" id="GO:0015935">
    <property type="term" value="C:small ribosomal subunit"/>
    <property type="evidence" value="ECO:0007669"/>
    <property type="project" value="InterPro"/>
</dbReference>
<dbReference type="GO" id="GO:0019843">
    <property type="term" value="F:rRNA binding"/>
    <property type="evidence" value="ECO:0007669"/>
    <property type="project" value="UniProtKB-UniRule"/>
</dbReference>
<dbReference type="GO" id="GO:0003735">
    <property type="term" value="F:structural constituent of ribosome"/>
    <property type="evidence" value="ECO:0007669"/>
    <property type="project" value="InterPro"/>
</dbReference>
<dbReference type="GO" id="GO:0042274">
    <property type="term" value="P:ribosomal small subunit biogenesis"/>
    <property type="evidence" value="ECO:0007669"/>
    <property type="project" value="TreeGrafter"/>
</dbReference>
<dbReference type="GO" id="GO:0006412">
    <property type="term" value="P:translation"/>
    <property type="evidence" value="ECO:0007669"/>
    <property type="project" value="UniProtKB-UniRule"/>
</dbReference>
<dbReference type="CDD" id="cd00165">
    <property type="entry name" value="S4"/>
    <property type="match status" value="1"/>
</dbReference>
<dbReference type="FunFam" id="1.10.1050.10:FF:000001">
    <property type="entry name" value="30S ribosomal protein S4"/>
    <property type="match status" value="1"/>
</dbReference>
<dbReference type="FunFam" id="3.10.290.10:FF:000001">
    <property type="entry name" value="30S ribosomal protein S4"/>
    <property type="match status" value="1"/>
</dbReference>
<dbReference type="Gene3D" id="1.10.1050.10">
    <property type="entry name" value="Ribosomal Protein S4 Delta 41, Chain A, domain 1"/>
    <property type="match status" value="1"/>
</dbReference>
<dbReference type="Gene3D" id="3.10.290.10">
    <property type="entry name" value="RNA-binding S4 domain"/>
    <property type="match status" value="1"/>
</dbReference>
<dbReference type="HAMAP" id="MF_01306_B">
    <property type="entry name" value="Ribosomal_uS4_B"/>
    <property type="match status" value="1"/>
</dbReference>
<dbReference type="InterPro" id="IPR022801">
    <property type="entry name" value="Ribosomal_uS4"/>
</dbReference>
<dbReference type="InterPro" id="IPR005709">
    <property type="entry name" value="Ribosomal_uS4_bac-type"/>
</dbReference>
<dbReference type="InterPro" id="IPR018079">
    <property type="entry name" value="Ribosomal_uS4_CS"/>
</dbReference>
<dbReference type="InterPro" id="IPR001912">
    <property type="entry name" value="Ribosomal_uS4_N"/>
</dbReference>
<dbReference type="InterPro" id="IPR002942">
    <property type="entry name" value="S4_RNA-bd"/>
</dbReference>
<dbReference type="InterPro" id="IPR036986">
    <property type="entry name" value="S4_RNA-bd_sf"/>
</dbReference>
<dbReference type="NCBIfam" id="NF003717">
    <property type="entry name" value="PRK05327.1"/>
    <property type="match status" value="1"/>
</dbReference>
<dbReference type="NCBIfam" id="TIGR01017">
    <property type="entry name" value="rpsD_bact"/>
    <property type="match status" value="1"/>
</dbReference>
<dbReference type="PANTHER" id="PTHR11831">
    <property type="entry name" value="30S 40S RIBOSOMAL PROTEIN"/>
    <property type="match status" value="1"/>
</dbReference>
<dbReference type="PANTHER" id="PTHR11831:SF4">
    <property type="entry name" value="SMALL RIBOSOMAL SUBUNIT PROTEIN US4M"/>
    <property type="match status" value="1"/>
</dbReference>
<dbReference type="Pfam" id="PF00163">
    <property type="entry name" value="Ribosomal_S4"/>
    <property type="match status" value="1"/>
</dbReference>
<dbReference type="Pfam" id="PF01479">
    <property type="entry name" value="S4"/>
    <property type="match status" value="1"/>
</dbReference>
<dbReference type="SMART" id="SM01390">
    <property type="entry name" value="Ribosomal_S4"/>
    <property type="match status" value="1"/>
</dbReference>
<dbReference type="SMART" id="SM00363">
    <property type="entry name" value="S4"/>
    <property type="match status" value="1"/>
</dbReference>
<dbReference type="SUPFAM" id="SSF55174">
    <property type="entry name" value="Alpha-L RNA-binding motif"/>
    <property type="match status" value="1"/>
</dbReference>
<dbReference type="PROSITE" id="PS00632">
    <property type="entry name" value="RIBOSOMAL_S4"/>
    <property type="match status" value="1"/>
</dbReference>
<dbReference type="PROSITE" id="PS50889">
    <property type="entry name" value="S4"/>
    <property type="match status" value="1"/>
</dbReference>
<organism>
    <name type="scientific">Thermoanaerobacter sp. (strain X514)</name>
    <dbReference type="NCBI Taxonomy" id="399726"/>
    <lineage>
        <taxon>Bacteria</taxon>
        <taxon>Bacillati</taxon>
        <taxon>Bacillota</taxon>
        <taxon>Clostridia</taxon>
        <taxon>Thermoanaerobacterales</taxon>
        <taxon>Thermoanaerobacteraceae</taxon>
        <taxon>Thermoanaerobacter</taxon>
    </lineage>
</organism>
<comment type="function">
    <text evidence="1">One of the primary rRNA binding proteins, it binds directly to 16S rRNA where it nucleates assembly of the body of the 30S subunit.</text>
</comment>
<comment type="function">
    <text evidence="1">With S5 and S12 plays an important role in translational accuracy.</text>
</comment>
<comment type="subunit">
    <text evidence="1">Part of the 30S ribosomal subunit. Contacts protein S5. The interaction surface between S4 and S5 is involved in control of translational fidelity.</text>
</comment>
<comment type="similarity">
    <text evidence="1">Belongs to the universal ribosomal protein uS4 family.</text>
</comment>
<protein>
    <recommendedName>
        <fullName evidence="1">Small ribosomal subunit protein uS4</fullName>
    </recommendedName>
    <alternativeName>
        <fullName evidence="2">30S ribosomal protein S4</fullName>
    </alternativeName>
</protein>
<accession>B0K5S0</accession>
<gene>
    <name evidence="1" type="primary">rpsD</name>
    <name type="ordered locus">Teth514_0894</name>
</gene>
<evidence type="ECO:0000255" key="1">
    <source>
        <dbReference type="HAMAP-Rule" id="MF_01306"/>
    </source>
</evidence>
<evidence type="ECO:0000305" key="2"/>
<keyword id="KW-0687">Ribonucleoprotein</keyword>
<keyword id="KW-0689">Ribosomal protein</keyword>
<keyword id="KW-0694">RNA-binding</keyword>
<keyword id="KW-0699">rRNA-binding</keyword>
<name>RS4_THEPX</name>
<sequence>MGRYTGPTCRLCRREGMKLYLKGDKCYTDKCPFARRGYAPGQHGQEKKKLTNYGMQLREKQKLKRYYGVLERQFERLYEEAERMKGITGENLLQLLERRLDNVVFRLGFAASRPQARQLVSHGHIEVNGKKVDIPSFLVKPGDVISVREKSRSMELIKNNLEVSRNVPDWLELNKDAFEGRVVSLPRREHIDLPIQEHLIVELYSK</sequence>
<proteinExistence type="inferred from homology"/>